<accession>A5U087</accession>
<organism>
    <name type="scientific">Mycobacterium tuberculosis (strain ATCC 25177 / H37Ra)</name>
    <dbReference type="NCBI Taxonomy" id="419947"/>
    <lineage>
        <taxon>Bacteria</taxon>
        <taxon>Bacillati</taxon>
        <taxon>Actinomycetota</taxon>
        <taxon>Actinomycetes</taxon>
        <taxon>Mycobacteriales</taxon>
        <taxon>Mycobacteriaceae</taxon>
        <taxon>Mycobacterium</taxon>
        <taxon>Mycobacterium tuberculosis complex</taxon>
    </lineage>
</organism>
<name>RL3_MYCTA</name>
<sequence length="217" mass="23090">MARKGILGTKLGMTQVFDESNRVVPVTVVKAGPNVVTRIRTPERDGYSAVQLAYGEISPRKVNKPLTGQYTAAGVNPRRYLAELRLDDSDAATEYQVGQELTAEIFADGSYVDVTGTSKGKGFAGTMKRHGFRGQGASHGAQAVHRRPGSIGGCATPARVFKGTRMAGRMGNDRVTVLNLLVHKVDAENGVLLIKGAVPGRTGGLVMVRSAIKRGEK</sequence>
<evidence type="ECO:0000255" key="1">
    <source>
        <dbReference type="HAMAP-Rule" id="MF_01325"/>
    </source>
</evidence>
<evidence type="ECO:0000305" key="2"/>
<evidence type="ECO:0007829" key="3">
    <source>
        <dbReference type="PDB" id="7F0D"/>
    </source>
</evidence>
<dbReference type="EMBL" id="CP000611">
    <property type="protein sequence ID" value="ABQ72437.1"/>
    <property type="molecule type" value="Genomic_DNA"/>
</dbReference>
<dbReference type="RefSeq" id="WP_003403579.1">
    <property type="nucleotide sequence ID" value="NZ_CP016972.1"/>
</dbReference>
<dbReference type="PDB" id="7F0D">
    <property type="method" value="EM"/>
    <property type="resolution" value="3.30 A"/>
    <property type="chains" value="D=1-217"/>
</dbReference>
<dbReference type="PDBsum" id="7F0D"/>
<dbReference type="SMR" id="A5U087"/>
<dbReference type="GeneID" id="45424666"/>
<dbReference type="KEGG" id="mra:MRA_0709"/>
<dbReference type="eggNOG" id="COG0087">
    <property type="taxonomic scope" value="Bacteria"/>
</dbReference>
<dbReference type="HOGENOM" id="CLU_044142_4_1_11"/>
<dbReference type="Proteomes" id="UP000001988">
    <property type="component" value="Chromosome"/>
</dbReference>
<dbReference type="GO" id="GO:0022625">
    <property type="term" value="C:cytosolic large ribosomal subunit"/>
    <property type="evidence" value="ECO:0007669"/>
    <property type="project" value="TreeGrafter"/>
</dbReference>
<dbReference type="GO" id="GO:0019843">
    <property type="term" value="F:rRNA binding"/>
    <property type="evidence" value="ECO:0007669"/>
    <property type="project" value="UniProtKB-UniRule"/>
</dbReference>
<dbReference type="GO" id="GO:0003735">
    <property type="term" value="F:structural constituent of ribosome"/>
    <property type="evidence" value="ECO:0007669"/>
    <property type="project" value="InterPro"/>
</dbReference>
<dbReference type="GO" id="GO:0006412">
    <property type="term" value="P:translation"/>
    <property type="evidence" value="ECO:0007669"/>
    <property type="project" value="UniProtKB-UniRule"/>
</dbReference>
<dbReference type="FunFam" id="2.40.30.10:FF:000004">
    <property type="entry name" value="50S ribosomal protein L3"/>
    <property type="match status" value="1"/>
</dbReference>
<dbReference type="FunFam" id="3.30.160.810:FF:000001">
    <property type="entry name" value="50S ribosomal protein L3"/>
    <property type="match status" value="1"/>
</dbReference>
<dbReference type="Gene3D" id="3.30.160.810">
    <property type="match status" value="1"/>
</dbReference>
<dbReference type="Gene3D" id="2.40.30.10">
    <property type="entry name" value="Translation factors"/>
    <property type="match status" value="1"/>
</dbReference>
<dbReference type="HAMAP" id="MF_01325_B">
    <property type="entry name" value="Ribosomal_uL3_B"/>
    <property type="match status" value="1"/>
</dbReference>
<dbReference type="InterPro" id="IPR000597">
    <property type="entry name" value="Ribosomal_uL3"/>
</dbReference>
<dbReference type="InterPro" id="IPR019927">
    <property type="entry name" value="Ribosomal_uL3_bac/org-type"/>
</dbReference>
<dbReference type="InterPro" id="IPR019926">
    <property type="entry name" value="Ribosomal_uL3_CS"/>
</dbReference>
<dbReference type="InterPro" id="IPR009000">
    <property type="entry name" value="Transl_B-barrel_sf"/>
</dbReference>
<dbReference type="NCBIfam" id="TIGR03625">
    <property type="entry name" value="L3_bact"/>
    <property type="match status" value="1"/>
</dbReference>
<dbReference type="PANTHER" id="PTHR11229">
    <property type="entry name" value="50S RIBOSOMAL PROTEIN L3"/>
    <property type="match status" value="1"/>
</dbReference>
<dbReference type="PANTHER" id="PTHR11229:SF16">
    <property type="entry name" value="LARGE RIBOSOMAL SUBUNIT PROTEIN UL3C"/>
    <property type="match status" value="1"/>
</dbReference>
<dbReference type="Pfam" id="PF00297">
    <property type="entry name" value="Ribosomal_L3"/>
    <property type="match status" value="1"/>
</dbReference>
<dbReference type="SUPFAM" id="SSF50447">
    <property type="entry name" value="Translation proteins"/>
    <property type="match status" value="1"/>
</dbReference>
<dbReference type="PROSITE" id="PS00474">
    <property type="entry name" value="RIBOSOMAL_L3"/>
    <property type="match status" value="1"/>
</dbReference>
<keyword id="KW-0002">3D-structure</keyword>
<keyword id="KW-1185">Reference proteome</keyword>
<keyword id="KW-0687">Ribonucleoprotein</keyword>
<keyword id="KW-0689">Ribosomal protein</keyword>
<keyword id="KW-0694">RNA-binding</keyword>
<keyword id="KW-0699">rRNA-binding</keyword>
<comment type="function">
    <text evidence="1">One of the primary rRNA binding proteins, it binds directly near the 3'-end of the 23S rRNA, where it nucleates assembly of the 50S subunit.</text>
</comment>
<comment type="subunit">
    <text evidence="1">Part of the 50S ribosomal subunit. Forms a cluster with proteins L14 and L19.</text>
</comment>
<comment type="similarity">
    <text evidence="1">Belongs to the universal ribosomal protein uL3 family.</text>
</comment>
<feature type="chain" id="PRO_1000052092" description="Large ribosomal subunit protein uL3">
    <location>
        <begin position="1"/>
        <end position="217"/>
    </location>
</feature>
<feature type="strand" evidence="3">
    <location>
        <begin position="9"/>
        <end position="17"/>
    </location>
</feature>
<feature type="strand" evidence="3">
    <location>
        <begin position="23"/>
        <end position="30"/>
    </location>
</feature>
<feature type="turn" evidence="3">
    <location>
        <begin position="42"/>
        <end position="44"/>
    </location>
</feature>
<feature type="strand" evidence="3">
    <location>
        <begin position="49"/>
        <end position="54"/>
    </location>
</feature>
<feature type="helix" evidence="3">
    <location>
        <begin position="59"/>
        <end position="61"/>
    </location>
</feature>
<feature type="helix" evidence="3">
    <location>
        <begin position="64"/>
        <end position="73"/>
    </location>
</feature>
<feature type="strand" evidence="3">
    <location>
        <begin position="79"/>
        <end position="85"/>
    </location>
</feature>
<feature type="strand" evidence="3">
    <location>
        <begin position="92"/>
        <end position="94"/>
    </location>
</feature>
<feature type="helix" evidence="3">
    <location>
        <begin position="103"/>
        <end position="105"/>
    </location>
</feature>
<feature type="strand" evidence="3">
    <location>
        <begin position="111"/>
        <end position="117"/>
    </location>
</feature>
<feature type="turn" evidence="3">
    <location>
        <begin position="126"/>
        <end position="128"/>
    </location>
</feature>
<feature type="strand" evidence="3">
    <location>
        <begin position="137"/>
        <end position="140"/>
    </location>
</feature>
<feature type="strand" evidence="3">
    <location>
        <begin position="174"/>
        <end position="181"/>
    </location>
</feature>
<feature type="turn" evidence="3">
    <location>
        <begin position="187"/>
        <end position="189"/>
    </location>
</feature>
<feature type="strand" evidence="3">
    <location>
        <begin position="192"/>
        <end position="196"/>
    </location>
</feature>
<feature type="strand" evidence="3">
    <location>
        <begin position="207"/>
        <end position="210"/>
    </location>
</feature>
<reference key="1">
    <citation type="journal article" date="2008" name="PLoS ONE">
        <title>Genetic basis of virulence attenuation revealed by comparative genomic analysis of Mycobacterium tuberculosis strain H37Ra versus H37Rv.</title>
        <authorList>
            <person name="Zheng H."/>
            <person name="Lu L."/>
            <person name="Wang B."/>
            <person name="Pu S."/>
            <person name="Zhang X."/>
            <person name="Zhu G."/>
            <person name="Shi W."/>
            <person name="Zhang L."/>
            <person name="Wang H."/>
            <person name="Wang S."/>
            <person name="Zhao G."/>
            <person name="Zhang Y."/>
        </authorList>
    </citation>
    <scope>NUCLEOTIDE SEQUENCE [LARGE SCALE GENOMIC DNA]</scope>
    <source>
        <strain>ATCC 25177 / H37Ra</strain>
    </source>
</reference>
<protein>
    <recommendedName>
        <fullName evidence="1">Large ribosomal subunit protein uL3</fullName>
    </recommendedName>
    <alternativeName>
        <fullName evidence="2">50S ribosomal protein L3</fullName>
    </alternativeName>
</protein>
<proteinExistence type="evidence at protein level"/>
<gene>
    <name evidence="1" type="primary">rplC</name>
    <name type="ordered locus">MRA_0709</name>
</gene>